<proteinExistence type="evidence at protein level"/>
<keyword id="KW-0002">3D-structure</keyword>
<keyword id="KW-0090">Biological rhythms</keyword>
<keyword id="KW-0217">Developmental protein</keyword>
<keyword id="KW-0238">DNA-binding</keyword>
<keyword id="KW-0371">Homeobox</keyword>
<keyword id="KW-1017">Isopeptide bond</keyword>
<keyword id="KW-0539">Nucleus</keyword>
<keyword id="KW-0597">Phosphoprotein</keyword>
<keyword id="KW-1267">Proteomics identification</keyword>
<keyword id="KW-1185">Reference proteome</keyword>
<keyword id="KW-0678">Repressor</keyword>
<keyword id="KW-0804">Transcription</keyword>
<keyword id="KW-0805">Transcription regulation</keyword>
<keyword id="KW-0832">Ubl conjugation</keyword>
<dbReference type="EMBL" id="U44060">
    <property type="protein sequence ID" value="AAC50656.1"/>
    <property type="molecule type" value="mRNA"/>
</dbReference>
<dbReference type="EMBL" id="AK290176">
    <property type="protein sequence ID" value="BAF82865.1"/>
    <property type="molecule type" value="mRNA"/>
</dbReference>
<dbReference type="EMBL" id="AC011700">
    <property type="status" value="NOT_ANNOTATED_CDS"/>
    <property type="molecule type" value="Genomic_DNA"/>
</dbReference>
<dbReference type="EMBL" id="AL606537">
    <property type="status" value="NOT_ANNOTATED_CDS"/>
    <property type="molecule type" value="Genomic_DNA"/>
</dbReference>
<dbReference type="EMBL" id="CH471100">
    <property type="protein sequence ID" value="EAW93360.1"/>
    <property type="molecule type" value="Genomic_DNA"/>
</dbReference>
<dbReference type="EMBL" id="BC024201">
    <property type="protein sequence ID" value="AAH24201.1"/>
    <property type="molecule type" value="mRNA"/>
</dbReference>
<dbReference type="CCDS" id="CCDS31021.1"/>
<dbReference type="RefSeq" id="NP_001257545.1">
    <property type="nucleotide sequence ID" value="NM_001270616.2"/>
</dbReference>
<dbReference type="RefSeq" id="NP_002754.2">
    <property type="nucleotide sequence ID" value="NM_002763.4"/>
</dbReference>
<dbReference type="RefSeq" id="XP_016857322.1">
    <property type="nucleotide sequence ID" value="XM_017001833.2"/>
</dbReference>
<dbReference type="RefSeq" id="XP_047281530.1">
    <property type="nucleotide sequence ID" value="XM_047425574.1"/>
</dbReference>
<dbReference type="RefSeq" id="XP_047281531.1">
    <property type="nucleotide sequence ID" value="XM_047425575.1"/>
</dbReference>
<dbReference type="RefSeq" id="XP_047281541.1">
    <property type="nucleotide sequence ID" value="XM_047425585.1"/>
</dbReference>
<dbReference type="RefSeq" id="XP_054193709.1">
    <property type="nucleotide sequence ID" value="XM_054337734.1"/>
</dbReference>
<dbReference type="RefSeq" id="XP_054193710.1">
    <property type="nucleotide sequence ID" value="XM_054337735.1"/>
</dbReference>
<dbReference type="RefSeq" id="XP_054193711.1">
    <property type="nucleotide sequence ID" value="XM_054337736.1"/>
</dbReference>
<dbReference type="RefSeq" id="XP_054193712.1">
    <property type="nucleotide sequence ID" value="XM_054337737.1"/>
</dbReference>
<dbReference type="PDB" id="2LMD">
    <property type="method" value="NMR"/>
    <property type="chains" value="A=575-737"/>
</dbReference>
<dbReference type="PDBsum" id="2LMD"/>
<dbReference type="BMRB" id="Q92786"/>
<dbReference type="SMR" id="Q92786"/>
<dbReference type="BioGRID" id="111613">
    <property type="interactions" value="34"/>
</dbReference>
<dbReference type="FunCoup" id="Q92786">
    <property type="interactions" value="2032"/>
</dbReference>
<dbReference type="IntAct" id="Q92786">
    <property type="interactions" value="21"/>
</dbReference>
<dbReference type="MINT" id="Q92786"/>
<dbReference type="STRING" id="9606.ENSP00000355925"/>
<dbReference type="iPTMnet" id="Q92786"/>
<dbReference type="PhosphoSitePlus" id="Q92786"/>
<dbReference type="BioMuta" id="PROX1"/>
<dbReference type="DMDM" id="85702224"/>
<dbReference type="jPOST" id="Q92786"/>
<dbReference type="MassIVE" id="Q92786"/>
<dbReference type="PaxDb" id="9606-ENSP00000355925"/>
<dbReference type="PeptideAtlas" id="Q92786"/>
<dbReference type="ProteomicsDB" id="75470"/>
<dbReference type="Pumba" id="Q92786"/>
<dbReference type="Antibodypedia" id="34616">
    <property type="antibodies" value="627 antibodies from 44 providers"/>
</dbReference>
<dbReference type="DNASU" id="5629"/>
<dbReference type="Ensembl" id="ENST00000366958.9">
    <property type="protein sequence ID" value="ENSP00000355925.4"/>
    <property type="gene ID" value="ENSG00000117707.17"/>
</dbReference>
<dbReference type="Ensembl" id="ENST00000435016.2">
    <property type="protein sequence ID" value="ENSP00000400694.1"/>
    <property type="gene ID" value="ENSG00000117707.17"/>
</dbReference>
<dbReference type="GeneID" id="5629"/>
<dbReference type="KEGG" id="hsa:5629"/>
<dbReference type="MANE-Select" id="ENST00000366958.9">
    <property type="protein sequence ID" value="ENSP00000355925.4"/>
    <property type="RefSeq nucleotide sequence ID" value="NM_001270616.2"/>
    <property type="RefSeq protein sequence ID" value="NP_001257545.1"/>
</dbReference>
<dbReference type="UCSC" id="uc001hkg.3">
    <property type="organism name" value="human"/>
</dbReference>
<dbReference type="AGR" id="HGNC:9459"/>
<dbReference type="CTD" id="5629"/>
<dbReference type="DisGeNET" id="5629"/>
<dbReference type="GeneCards" id="PROX1"/>
<dbReference type="HGNC" id="HGNC:9459">
    <property type="gene designation" value="PROX1"/>
</dbReference>
<dbReference type="HPA" id="ENSG00000117707">
    <property type="expression patterns" value="Tissue enriched (liver)"/>
</dbReference>
<dbReference type="MIM" id="601546">
    <property type="type" value="gene"/>
</dbReference>
<dbReference type="neXtProt" id="NX_Q92786"/>
<dbReference type="OpenTargets" id="ENSG00000117707"/>
<dbReference type="PharmGKB" id="PA33812"/>
<dbReference type="VEuPathDB" id="HostDB:ENSG00000117707"/>
<dbReference type="eggNOG" id="KOG3779">
    <property type="taxonomic scope" value="Eukaryota"/>
</dbReference>
<dbReference type="GeneTree" id="ENSGT00940000154790"/>
<dbReference type="HOGENOM" id="CLU_016051_0_0_1"/>
<dbReference type="InParanoid" id="Q92786"/>
<dbReference type="OMA" id="NGDNHNF"/>
<dbReference type="OrthoDB" id="10038576at2759"/>
<dbReference type="PAN-GO" id="Q92786">
    <property type="GO annotations" value="4 GO annotations based on evolutionary models"/>
</dbReference>
<dbReference type="PhylomeDB" id="Q92786"/>
<dbReference type="TreeFam" id="TF316638"/>
<dbReference type="PathwayCommons" id="Q92786"/>
<dbReference type="SignaLink" id="Q92786"/>
<dbReference type="SIGNOR" id="Q92786"/>
<dbReference type="BioGRID-ORCS" id="5629">
    <property type="hits" value="23 hits in 1186 CRISPR screens"/>
</dbReference>
<dbReference type="ChiTaRS" id="PROX1">
    <property type="organism name" value="human"/>
</dbReference>
<dbReference type="EvolutionaryTrace" id="Q92786"/>
<dbReference type="GeneWiki" id="PROX1"/>
<dbReference type="GenomeRNAi" id="5629"/>
<dbReference type="Pharos" id="Q92786">
    <property type="development level" value="Tbio"/>
</dbReference>
<dbReference type="PRO" id="PR:Q92786"/>
<dbReference type="Proteomes" id="UP000005640">
    <property type="component" value="Chromosome 1"/>
</dbReference>
<dbReference type="RNAct" id="Q92786">
    <property type="molecule type" value="protein"/>
</dbReference>
<dbReference type="Bgee" id="ENSG00000117707">
    <property type="expression patterns" value="Expressed in sural nerve and 159 other cell types or tissues"/>
</dbReference>
<dbReference type="ExpressionAtlas" id="Q92786">
    <property type="expression patterns" value="baseline and differential"/>
</dbReference>
<dbReference type="GO" id="GO:0000785">
    <property type="term" value="C:chromatin"/>
    <property type="evidence" value="ECO:0000247"/>
    <property type="project" value="NTNU_SB"/>
</dbReference>
<dbReference type="GO" id="GO:0005737">
    <property type="term" value="C:cytoplasm"/>
    <property type="evidence" value="ECO:0000314"/>
    <property type="project" value="BHF-UCL"/>
</dbReference>
<dbReference type="GO" id="GO:0005829">
    <property type="term" value="C:cytosol"/>
    <property type="evidence" value="ECO:0000314"/>
    <property type="project" value="HPA"/>
</dbReference>
<dbReference type="GO" id="GO:0005654">
    <property type="term" value="C:nucleoplasm"/>
    <property type="evidence" value="ECO:0000314"/>
    <property type="project" value="HPA"/>
</dbReference>
<dbReference type="GO" id="GO:0005634">
    <property type="term" value="C:nucleus"/>
    <property type="evidence" value="ECO:0000314"/>
    <property type="project" value="BHF-UCL"/>
</dbReference>
<dbReference type="GO" id="GO:0003677">
    <property type="term" value="F:DNA binding"/>
    <property type="evidence" value="ECO:0000315"/>
    <property type="project" value="BHF-UCL"/>
</dbReference>
<dbReference type="GO" id="GO:0050692">
    <property type="term" value="F:DNA binding domain binding"/>
    <property type="evidence" value="ECO:0000353"/>
    <property type="project" value="BHF-UCL"/>
</dbReference>
<dbReference type="GO" id="GO:0001228">
    <property type="term" value="F:DNA-binding transcription activator activity, RNA polymerase II-specific"/>
    <property type="evidence" value="ECO:0000314"/>
    <property type="project" value="BHF-UCL"/>
</dbReference>
<dbReference type="GO" id="GO:0000981">
    <property type="term" value="F:DNA-binding transcription factor activity, RNA polymerase II-specific"/>
    <property type="evidence" value="ECO:0000250"/>
    <property type="project" value="BHF-UCL"/>
</dbReference>
<dbReference type="GO" id="GO:0001227">
    <property type="term" value="F:DNA-binding transcription repressor activity, RNA polymerase II-specific"/>
    <property type="evidence" value="ECO:0000314"/>
    <property type="project" value="BHF-UCL"/>
</dbReference>
<dbReference type="GO" id="GO:0050693">
    <property type="term" value="F:LBD domain binding"/>
    <property type="evidence" value="ECO:0000353"/>
    <property type="project" value="BHF-UCL"/>
</dbReference>
<dbReference type="GO" id="GO:0016922">
    <property type="term" value="F:nuclear receptor binding"/>
    <property type="evidence" value="ECO:0000353"/>
    <property type="project" value="BHF-UCL"/>
</dbReference>
<dbReference type="GO" id="GO:0000978">
    <property type="term" value="F:RNA polymerase II cis-regulatory region sequence-specific DNA binding"/>
    <property type="evidence" value="ECO:0000250"/>
    <property type="project" value="UniProtKB"/>
</dbReference>
<dbReference type="GO" id="GO:1990837">
    <property type="term" value="F:sequence-specific double-stranded DNA binding"/>
    <property type="evidence" value="ECO:0000314"/>
    <property type="project" value="ARUK-UCL"/>
</dbReference>
<dbReference type="GO" id="GO:0000976">
    <property type="term" value="F:transcription cis-regulatory region binding"/>
    <property type="evidence" value="ECO:0000314"/>
    <property type="project" value="BHF-UCL"/>
</dbReference>
<dbReference type="GO" id="GO:0090425">
    <property type="term" value="P:acinar cell differentiation"/>
    <property type="evidence" value="ECO:0007669"/>
    <property type="project" value="Ensembl"/>
</dbReference>
<dbReference type="GO" id="GO:0060414">
    <property type="term" value="P:aorta smooth muscle tissue morphogenesis"/>
    <property type="evidence" value="ECO:0000250"/>
    <property type="project" value="BHF-UCL"/>
</dbReference>
<dbReference type="GO" id="GO:0055009">
    <property type="term" value="P:atrial cardiac muscle tissue morphogenesis"/>
    <property type="evidence" value="ECO:0000250"/>
    <property type="project" value="BHF-UCL"/>
</dbReference>
<dbReference type="GO" id="GO:0060837">
    <property type="term" value="P:blood vessel endothelial cell differentiation"/>
    <property type="evidence" value="ECO:0007669"/>
    <property type="project" value="Ensembl"/>
</dbReference>
<dbReference type="GO" id="GO:0007420">
    <property type="term" value="P:brain development"/>
    <property type="evidence" value="ECO:0000270"/>
    <property type="project" value="BHF-UCL"/>
</dbReference>
<dbReference type="GO" id="GO:0061114">
    <property type="term" value="P:branching involved in pancreas morphogenesis"/>
    <property type="evidence" value="ECO:0007669"/>
    <property type="project" value="Ensembl"/>
</dbReference>
<dbReference type="GO" id="GO:0021707">
    <property type="term" value="P:cerebellar granule cell differentiation"/>
    <property type="evidence" value="ECO:0000250"/>
    <property type="project" value="BHF-UCL"/>
</dbReference>
<dbReference type="GO" id="GO:0007623">
    <property type="term" value="P:circadian rhythm"/>
    <property type="evidence" value="ECO:0007669"/>
    <property type="project" value="Ensembl"/>
</dbReference>
<dbReference type="GO" id="GO:0021542">
    <property type="term" value="P:dentate gyrus development"/>
    <property type="evidence" value="ECO:0000250"/>
    <property type="project" value="BHF-UCL"/>
</dbReference>
<dbReference type="GO" id="GO:0021516">
    <property type="term" value="P:dorsal spinal cord development"/>
    <property type="evidence" value="ECO:0000250"/>
    <property type="project" value="BHF-UCL"/>
</dbReference>
<dbReference type="GO" id="GO:0060059">
    <property type="term" value="P:embryonic retina morphogenesis in camera-type eye"/>
    <property type="evidence" value="ECO:0000270"/>
    <property type="project" value="BHF-UCL"/>
</dbReference>
<dbReference type="GO" id="GO:0060214">
    <property type="term" value="P:endocardium formation"/>
    <property type="evidence" value="ECO:0000250"/>
    <property type="project" value="BHF-UCL"/>
</dbReference>
<dbReference type="GO" id="GO:0010631">
    <property type="term" value="P:epithelial cell migration"/>
    <property type="evidence" value="ECO:0007669"/>
    <property type="project" value="Ensembl"/>
</dbReference>
<dbReference type="GO" id="GO:0002194">
    <property type="term" value="P:hepatocyte cell migration"/>
    <property type="evidence" value="ECO:0007669"/>
    <property type="project" value="Ensembl"/>
</dbReference>
<dbReference type="GO" id="GO:0070365">
    <property type="term" value="P:hepatocyte differentiation"/>
    <property type="evidence" value="ECO:0000270"/>
    <property type="project" value="BHF-UCL"/>
</dbReference>
<dbReference type="GO" id="GO:0072574">
    <property type="term" value="P:hepatocyte proliferation"/>
    <property type="evidence" value="ECO:0007669"/>
    <property type="project" value="Ensembl"/>
</dbReference>
<dbReference type="GO" id="GO:0001822">
    <property type="term" value="P:kidney development"/>
    <property type="evidence" value="ECO:0000270"/>
    <property type="project" value="BHF-UCL"/>
</dbReference>
<dbReference type="GO" id="GO:0002088">
    <property type="term" value="P:lens development in camera-type eye"/>
    <property type="evidence" value="ECO:0000270"/>
    <property type="project" value="BHF-UCL"/>
</dbReference>
<dbReference type="GO" id="GO:0070309">
    <property type="term" value="P:lens fiber cell morphogenesis"/>
    <property type="evidence" value="ECO:0000270"/>
    <property type="project" value="BHF-UCL"/>
</dbReference>
<dbReference type="GO" id="GO:0046619">
    <property type="term" value="P:lens placode formation involved in camera-type eye formation"/>
    <property type="evidence" value="ECO:0000250"/>
    <property type="project" value="BHF-UCL"/>
</dbReference>
<dbReference type="GO" id="GO:0001889">
    <property type="term" value="P:liver development"/>
    <property type="evidence" value="ECO:0000270"/>
    <property type="project" value="BHF-UCL"/>
</dbReference>
<dbReference type="GO" id="GO:0030324">
    <property type="term" value="P:lung development"/>
    <property type="evidence" value="ECO:0000270"/>
    <property type="project" value="BHF-UCL"/>
</dbReference>
<dbReference type="GO" id="GO:0001946">
    <property type="term" value="P:lymphangiogenesis"/>
    <property type="evidence" value="ECO:0000314"/>
    <property type="project" value="BHF-UCL"/>
</dbReference>
<dbReference type="GO" id="GO:0060836">
    <property type="term" value="P:lymphatic endothelial cell differentiation"/>
    <property type="evidence" value="ECO:0000314"/>
    <property type="project" value="BHF-UCL"/>
</dbReference>
<dbReference type="GO" id="GO:0060838">
    <property type="term" value="P:lymphatic endothelial cell fate commitment"/>
    <property type="evidence" value="ECO:0000315"/>
    <property type="project" value="BHF-UCL"/>
</dbReference>
<dbReference type="GO" id="GO:0070858">
    <property type="term" value="P:negative regulation of bile acid biosynthetic process"/>
    <property type="evidence" value="ECO:0000315"/>
    <property type="project" value="BHF-UCL"/>
</dbReference>
<dbReference type="GO" id="GO:0008285">
    <property type="term" value="P:negative regulation of cell population proliferation"/>
    <property type="evidence" value="ECO:0000315"/>
    <property type="project" value="BHF-UCL"/>
</dbReference>
<dbReference type="GO" id="GO:0045892">
    <property type="term" value="P:negative regulation of DNA-templated transcription"/>
    <property type="evidence" value="ECO:0000314"/>
    <property type="project" value="BHF-UCL"/>
</dbReference>
<dbReference type="GO" id="GO:0007406">
    <property type="term" value="P:negative regulation of neuroblast proliferation"/>
    <property type="evidence" value="ECO:0007669"/>
    <property type="project" value="Ensembl"/>
</dbReference>
<dbReference type="GO" id="GO:0000122">
    <property type="term" value="P:negative regulation of transcription by RNA polymerase II"/>
    <property type="evidence" value="ECO:0000314"/>
    <property type="project" value="BHF-UCL"/>
</dbReference>
<dbReference type="GO" id="GO:0045071">
    <property type="term" value="P:negative regulation of viral genome replication"/>
    <property type="evidence" value="ECO:0000314"/>
    <property type="project" value="BHF-UCL"/>
</dbReference>
<dbReference type="GO" id="GO:0021915">
    <property type="term" value="P:neural tube development"/>
    <property type="evidence" value="ECO:0000250"/>
    <property type="project" value="BHF-UCL"/>
</dbReference>
<dbReference type="GO" id="GO:0007405">
    <property type="term" value="P:neuroblast proliferation"/>
    <property type="evidence" value="ECO:0007669"/>
    <property type="project" value="Ensembl"/>
</dbReference>
<dbReference type="GO" id="GO:0048664">
    <property type="term" value="P:neuron fate determination"/>
    <property type="evidence" value="ECO:0007669"/>
    <property type="project" value="Ensembl"/>
</dbReference>
<dbReference type="GO" id="GO:0097150">
    <property type="term" value="P:neuronal stem cell population maintenance"/>
    <property type="evidence" value="ECO:0000250"/>
    <property type="project" value="BHF-UCL"/>
</dbReference>
<dbReference type="GO" id="GO:0030910">
    <property type="term" value="P:olfactory placode formation"/>
    <property type="evidence" value="ECO:0000250"/>
    <property type="project" value="BHF-UCL"/>
</dbReference>
<dbReference type="GO" id="GO:0043049">
    <property type="term" value="P:otic placode formation"/>
    <property type="evidence" value="ECO:0000250"/>
    <property type="project" value="BHF-UCL"/>
</dbReference>
<dbReference type="GO" id="GO:0031016">
    <property type="term" value="P:pancreas development"/>
    <property type="evidence" value="ECO:0000270"/>
    <property type="project" value="BHF-UCL"/>
</dbReference>
<dbReference type="GO" id="GO:0045787">
    <property type="term" value="P:positive regulation of cell cycle"/>
    <property type="evidence" value="ECO:0000250"/>
    <property type="project" value="BHF-UCL"/>
</dbReference>
<dbReference type="GO" id="GO:1901978">
    <property type="term" value="P:positive regulation of cell cycle checkpoint"/>
    <property type="evidence" value="ECO:0007669"/>
    <property type="project" value="Ensembl"/>
</dbReference>
<dbReference type="GO" id="GO:0008284">
    <property type="term" value="P:positive regulation of cell population proliferation"/>
    <property type="evidence" value="ECO:0000314"/>
    <property type="project" value="BHF-UCL"/>
</dbReference>
<dbReference type="GO" id="GO:0010595">
    <property type="term" value="P:positive regulation of endothelial cell migration"/>
    <property type="evidence" value="ECO:0000314"/>
    <property type="project" value="BHF-UCL"/>
</dbReference>
<dbReference type="GO" id="GO:0001938">
    <property type="term" value="P:positive regulation of endothelial cell proliferation"/>
    <property type="evidence" value="ECO:0000314"/>
    <property type="project" value="BHF-UCL"/>
</dbReference>
<dbReference type="GO" id="GO:2000979">
    <property type="term" value="P:positive regulation of forebrain neuron differentiation"/>
    <property type="evidence" value="ECO:0000250"/>
    <property type="project" value="BHF-UCL"/>
</dbReference>
<dbReference type="GO" id="GO:0060421">
    <property type="term" value="P:positive regulation of heart growth"/>
    <property type="evidence" value="ECO:0000250"/>
    <property type="project" value="BHF-UCL"/>
</dbReference>
<dbReference type="GO" id="GO:2000179">
    <property type="term" value="P:positive regulation of neural precursor cell proliferation"/>
    <property type="evidence" value="ECO:0000250"/>
    <property type="project" value="BHF-UCL"/>
</dbReference>
<dbReference type="GO" id="GO:0060298">
    <property type="term" value="P:positive regulation of sarcomere organization"/>
    <property type="evidence" value="ECO:0000250"/>
    <property type="project" value="BHF-UCL"/>
</dbReference>
<dbReference type="GO" id="GO:0045944">
    <property type="term" value="P:positive regulation of transcription by RNA polymerase II"/>
    <property type="evidence" value="ECO:0000315"/>
    <property type="project" value="BHF-UCL"/>
</dbReference>
<dbReference type="GO" id="GO:1900748">
    <property type="term" value="P:positive regulation of vascular endothelial growth factor signaling pathway"/>
    <property type="evidence" value="ECO:0000315"/>
    <property type="project" value="BHF-UCL"/>
</dbReference>
<dbReference type="GO" id="GO:0042752">
    <property type="term" value="P:regulation of circadian rhythm"/>
    <property type="evidence" value="ECO:0000315"/>
    <property type="project" value="UniProtKB"/>
</dbReference>
<dbReference type="GO" id="GO:0010468">
    <property type="term" value="P:regulation of gene expression"/>
    <property type="evidence" value="ECO:0000314"/>
    <property type="project" value="BHF-UCL"/>
</dbReference>
<dbReference type="GO" id="GO:0006357">
    <property type="term" value="P:regulation of transcription by RNA polymerase II"/>
    <property type="evidence" value="ECO:0000318"/>
    <property type="project" value="GO_Central"/>
</dbReference>
<dbReference type="GO" id="GO:0031667">
    <property type="term" value="P:response to nutrient levels"/>
    <property type="evidence" value="ECO:0007669"/>
    <property type="project" value="Ensembl"/>
</dbReference>
<dbReference type="GO" id="GO:0060042">
    <property type="term" value="P:retina morphogenesis in camera-type eye"/>
    <property type="evidence" value="ECO:0000250"/>
    <property type="project" value="BHF-UCL"/>
</dbReference>
<dbReference type="GO" id="GO:0030240">
    <property type="term" value="P:skeletal muscle thin filament assembly"/>
    <property type="evidence" value="ECO:0000250"/>
    <property type="project" value="BHF-UCL"/>
</dbReference>
<dbReference type="GO" id="GO:0006366">
    <property type="term" value="P:transcription by RNA polymerase II"/>
    <property type="evidence" value="ECO:0007669"/>
    <property type="project" value="Ensembl"/>
</dbReference>
<dbReference type="GO" id="GO:0048845">
    <property type="term" value="P:venous blood vessel morphogenesis"/>
    <property type="evidence" value="ECO:0000250"/>
    <property type="project" value="BHF-UCL"/>
</dbReference>
<dbReference type="GO" id="GO:0055010">
    <property type="term" value="P:ventricular cardiac muscle tissue morphogenesis"/>
    <property type="evidence" value="ECO:0000250"/>
    <property type="project" value="BHF-UCL"/>
</dbReference>
<dbReference type="GO" id="GO:0055005">
    <property type="term" value="P:ventricular cardiac myofibril assembly"/>
    <property type="evidence" value="ECO:0000250"/>
    <property type="project" value="BHF-UCL"/>
</dbReference>
<dbReference type="GO" id="GO:0060412">
    <property type="term" value="P:ventricular septum morphogenesis"/>
    <property type="evidence" value="ECO:0000250"/>
    <property type="project" value="BHF-UCL"/>
</dbReference>
<dbReference type="FunFam" id="1.10.10.500:FF:000001">
    <property type="entry name" value="Prospero homeobox protein 1"/>
    <property type="match status" value="1"/>
</dbReference>
<dbReference type="Gene3D" id="1.10.10.500">
    <property type="entry name" value="Homeo-prospero domain"/>
    <property type="match status" value="1"/>
</dbReference>
<dbReference type="InterPro" id="IPR023082">
    <property type="entry name" value="Homeo_prospero_dom"/>
</dbReference>
<dbReference type="InterPro" id="IPR037131">
    <property type="entry name" value="Homeo_prospero_dom_sf"/>
</dbReference>
<dbReference type="InterPro" id="IPR009057">
    <property type="entry name" value="Homeodomain-like_sf"/>
</dbReference>
<dbReference type="InterPro" id="IPR039350">
    <property type="entry name" value="Prospero_homeodomain"/>
</dbReference>
<dbReference type="PANTHER" id="PTHR12198">
    <property type="entry name" value="HOMEOBOX PROTEIN PROSPERO/PROX-1/CEH-26"/>
    <property type="match status" value="1"/>
</dbReference>
<dbReference type="PANTHER" id="PTHR12198:SF6">
    <property type="entry name" value="PROSPERO HOMEOBOX PROTEIN 1"/>
    <property type="match status" value="1"/>
</dbReference>
<dbReference type="Pfam" id="PF05044">
    <property type="entry name" value="HPD"/>
    <property type="match status" value="1"/>
</dbReference>
<dbReference type="SUPFAM" id="SSF46689">
    <property type="entry name" value="Homeodomain-like"/>
    <property type="match status" value="1"/>
</dbReference>
<dbReference type="PROSITE" id="PS51818">
    <property type="entry name" value="HOMEO_PROSPERO"/>
    <property type="match status" value="1"/>
</dbReference>
<reference key="1">
    <citation type="journal article" date="1996" name="Genomics">
        <title>Structure and chromosomal localization of the human homeobox gene Prox 1.</title>
        <authorList>
            <person name="Zinovieva R.D."/>
            <person name="Duncan M.K."/>
            <person name="Johnson T.R."/>
            <person name="Torres R."/>
            <person name="Polymeropoulos M.H."/>
            <person name="Tomarev S.I."/>
        </authorList>
    </citation>
    <scope>NUCLEOTIDE SEQUENCE [MRNA]</scope>
    <scope>TISSUE SPECIFICITY</scope>
    <source>
        <tissue>Embryonic brain</tissue>
    </source>
</reference>
<reference key="2">
    <citation type="journal article" date="2004" name="Nat. Genet.">
        <title>Complete sequencing and characterization of 21,243 full-length human cDNAs.</title>
        <authorList>
            <person name="Ota T."/>
            <person name="Suzuki Y."/>
            <person name="Nishikawa T."/>
            <person name="Otsuki T."/>
            <person name="Sugiyama T."/>
            <person name="Irie R."/>
            <person name="Wakamatsu A."/>
            <person name="Hayashi K."/>
            <person name="Sato H."/>
            <person name="Nagai K."/>
            <person name="Kimura K."/>
            <person name="Makita H."/>
            <person name="Sekine M."/>
            <person name="Obayashi M."/>
            <person name="Nishi T."/>
            <person name="Shibahara T."/>
            <person name="Tanaka T."/>
            <person name="Ishii S."/>
            <person name="Yamamoto J."/>
            <person name="Saito K."/>
            <person name="Kawai Y."/>
            <person name="Isono Y."/>
            <person name="Nakamura Y."/>
            <person name="Nagahari K."/>
            <person name="Murakami K."/>
            <person name="Yasuda T."/>
            <person name="Iwayanagi T."/>
            <person name="Wagatsuma M."/>
            <person name="Shiratori A."/>
            <person name="Sudo H."/>
            <person name="Hosoiri T."/>
            <person name="Kaku Y."/>
            <person name="Kodaira H."/>
            <person name="Kondo H."/>
            <person name="Sugawara M."/>
            <person name="Takahashi M."/>
            <person name="Kanda K."/>
            <person name="Yokoi T."/>
            <person name="Furuya T."/>
            <person name="Kikkawa E."/>
            <person name="Omura Y."/>
            <person name="Abe K."/>
            <person name="Kamihara K."/>
            <person name="Katsuta N."/>
            <person name="Sato K."/>
            <person name="Tanikawa M."/>
            <person name="Yamazaki M."/>
            <person name="Ninomiya K."/>
            <person name="Ishibashi T."/>
            <person name="Yamashita H."/>
            <person name="Murakawa K."/>
            <person name="Fujimori K."/>
            <person name="Tanai H."/>
            <person name="Kimata M."/>
            <person name="Watanabe M."/>
            <person name="Hiraoka S."/>
            <person name="Chiba Y."/>
            <person name="Ishida S."/>
            <person name="Ono Y."/>
            <person name="Takiguchi S."/>
            <person name="Watanabe S."/>
            <person name="Yosida M."/>
            <person name="Hotuta T."/>
            <person name="Kusano J."/>
            <person name="Kanehori K."/>
            <person name="Takahashi-Fujii A."/>
            <person name="Hara H."/>
            <person name="Tanase T.-O."/>
            <person name="Nomura Y."/>
            <person name="Togiya S."/>
            <person name="Komai F."/>
            <person name="Hara R."/>
            <person name="Takeuchi K."/>
            <person name="Arita M."/>
            <person name="Imose N."/>
            <person name="Musashino K."/>
            <person name="Yuuki H."/>
            <person name="Oshima A."/>
            <person name="Sasaki N."/>
            <person name="Aotsuka S."/>
            <person name="Yoshikawa Y."/>
            <person name="Matsunawa H."/>
            <person name="Ichihara T."/>
            <person name="Shiohata N."/>
            <person name="Sano S."/>
            <person name="Moriya S."/>
            <person name="Momiyama H."/>
            <person name="Satoh N."/>
            <person name="Takami S."/>
            <person name="Terashima Y."/>
            <person name="Suzuki O."/>
            <person name="Nakagawa S."/>
            <person name="Senoh A."/>
            <person name="Mizoguchi H."/>
            <person name="Goto Y."/>
            <person name="Shimizu F."/>
            <person name="Wakebe H."/>
            <person name="Hishigaki H."/>
            <person name="Watanabe T."/>
            <person name="Sugiyama A."/>
            <person name="Takemoto M."/>
            <person name="Kawakami B."/>
            <person name="Yamazaki M."/>
            <person name="Watanabe K."/>
            <person name="Kumagai A."/>
            <person name="Itakura S."/>
            <person name="Fukuzumi Y."/>
            <person name="Fujimori Y."/>
            <person name="Komiyama M."/>
            <person name="Tashiro H."/>
            <person name="Tanigami A."/>
            <person name="Fujiwara T."/>
            <person name="Ono T."/>
            <person name="Yamada K."/>
            <person name="Fujii Y."/>
            <person name="Ozaki K."/>
            <person name="Hirao M."/>
            <person name="Ohmori Y."/>
            <person name="Kawabata A."/>
            <person name="Hikiji T."/>
            <person name="Kobatake N."/>
            <person name="Inagaki H."/>
            <person name="Ikema Y."/>
            <person name="Okamoto S."/>
            <person name="Okitani R."/>
            <person name="Kawakami T."/>
            <person name="Noguchi S."/>
            <person name="Itoh T."/>
            <person name="Shigeta K."/>
            <person name="Senba T."/>
            <person name="Matsumura K."/>
            <person name="Nakajima Y."/>
            <person name="Mizuno T."/>
            <person name="Morinaga M."/>
            <person name="Sasaki M."/>
            <person name="Togashi T."/>
            <person name="Oyama M."/>
            <person name="Hata H."/>
            <person name="Watanabe M."/>
            <person name="Komatsu T."/>
            <person name="Mizushima-Sugano J."/>
            <person name="Satoh T."/>
            <person name="Shirai Y."/>
            <person name="Takahashi Y."/>
            <person name="Nakagawa K."/>
            <person name="Okumura K."/>
            <person name="Nagase T."/>
            <person name="Nomura N."/>
            <person name="Kikuchi H."/>
            <person name="Masuho Y."/>
            <person name="Yamashita R."/>
            <person name="Nakai K."/>
            <person name="Yada T."/>
            <person name="Nakamura Y."/>
            <person name="Ohara O."/>
            <person name="Isogai T."/>
            <person name="Sugano S."/>
        </authorList>
    </citation>
    <scope>NUCLEOTIDE SEQUENCE [LARGE SCALE MRNA]</scope>
</reference>
<reference key="3">
    <citation type="journal article" date="2006" name="Nature">
        <title>The DNA sequence and biological annotation of human chromosome 1.</title>
        <authorList>
            <person name="Gregory S.G."/>
            <person name="Barlow K.F."/>
            <person name="McLay K.E."/>
            <person name="Kaul R."/>
            <person name="Swarbreck D."/>
            <person name="Dunham A."/>
            <person name="Scott C.E."/>
            <person name="Howe K.L."/>
            <person name="Woodfine K."/>
            <person name="Spencer C.C.A."/>
            <person name="Jones M.C."/>
            <person name="Gillson C."/>
            <person name="Searle S."/>
            <person name="Zhou Y."/>
            <person name="Kokocinski F."/>
            <person name="McDonald L."/>
            <person name="Evans R."/>
            <person name="Phillips K."/>
            <person name="Atkinson A."/>
            <person name="Cooper R."/>
            <person name="Jones C."/>
            <person name="Hall R.E."/>
            <person name="Andrews T.D."/>
            <person name="Lloyd C."/>
            <person name="Ainscough R."/>
            <person name="Almeida J.P."/>
            <person name="Ambrose K.D."/>
            <person name="Anderson F."/>
            <person name="Andrew R.W."/>
            <person name="Ashwell R.I.S."/>
            <person name="Aubin K."/>
            <person name="Babbage A.K."/>
            <person name="Bagguley C.L."/>
            <person name="Bailey J."/>
            <person name="Beasley H."/>
            <person name="Bethel G."/>
            <person name="Bird C.P."/>
            <person name="Bray-Allen S."/>
            <person name="Brown J.Y."/>
            <person name="Brown A.J."/>
            <person name="Buckley D."/>
            <person name="Burton J."/>
            <person name="Bye J."/>
            <person name="Carder C."/>
            <person name="Chapman J.C."/>
            <person name="Clark S.Y."/>
            <person name="Clarke G."/>
            <person name="Clee C."/>
            <person name="Cobley V."/>
            <person name="Collier R.E."/>
            <person name="Corby N."/>
            <person name="Coville G.J."/>
            <person name="Davies J."/>
            <person name="Deadman R."/>
            <person name="Dunn M."/>
            <person name="Earthrowl M."/>
            <person name="Ellington A.G."/>
            <person name="Errington H."/>
            <person name="Frankish A."/>
            <person name="Frankland J."/>
            <person name="French L."/>
            <person name="Garner P."/>
            <person name="Garnett J."/>
            <person name="Gay L."/>
            <person name="Ghori M.R.J."/>
            <person name="Gibson R."/>
            <person name="Gilby L.M."/>
            <person name="Gillett W."/>
            <person name="Glithero R.J."/>
            <person name="Grafham D.V."/>
            <person name="Griffiths C."/>
            <person name="Griffiths-Jones S."/>
            <person name="Grocock R."/>
            <person name="Hammond S."/>
            <person name="Harrison E.S.I."/>
            <person name="Hart E."/>
            <person name="Haugen E."/>
            <person name="Heath P.D."/>
            <person name="Holmes S."/>
            <person name="Holt K."/>
            <person name="Howden P.J."/>
            <person name="Hunt A.R."/>
            <person name="Hunt S.E."/>
            <person name="Hunter G."/>
            <person name="Isherwood J."/>
            <person name="James R."/>
            <person name="Johnson C."/>
            <person name="Johnson D."/>
            <person name="Joy A."/>
            <person name="Kay M."/>
            <person name="Kershaw J.K."/>
            <person name="Kibukawa M."/>
            <person name="Kimberley A.M."/>
            <person name="King A."/>
            <person name="Knights A.J."/>
            <person name="Lad H."/>
            <person name="Laird G."/>
            <person name="Lawlor S."/>
            <person name="Leongamornlert D.A."/>
            <person name="Lloyd D.M."/>
            <person name="Loveland J."/>
            <person name="Lovell J."/>
            <person name="Lush M.J."/>
            <person name="Lyne R."/>
            <person name="Martin S."/>
            <person name="Mashreghi-Mohammadi M."/>
            <person name="Matthews L."/>
            <person name="Matthews N.S.W."/>
            <person name="McLaren S."/>
            <person name="Milne S."/>
            <person name="Mistry S."/>
            <person name="Moore M.J.F."/>
            <person name="Nickerson T."/>
            <person name="O'Dell C.N."/>
            <person name="Oliver K."/>
            <person name="Palmeiri A."/>
            <person name="Palmer S.A."/>
            <person name="Parker A."/>
            <person name="Patel D."/>
            <person name="Pearce A.V."/>
            <person name="Peck A.I."/>
            <person name="Pelan S."/>
            <person name="Phelps K."/>
            <person name="Phillimore B.J."/>
            <person name="Plumb R."/>
            <person name="Rajan J."/>
            <person name="Raymond C."/>
            <person name="Rouse G."/>
            <person name="Saenphimmachak C."/>
            <person name="Sehra H.K."/>
            <person name="Sheridan E."/>
            <person name="Shownkeen R."/>
            <person name="Sims S."/>
            <person name="Skuce C.D."/>
            <person name="Smith M."/>
            <person name="Steward C."/>
            <person name="Subramanian S."/>
            <person name="Sycamore N."/>
            <person name="Tracey A."/>
            <person name="Tromans A."/>
            <person name="Van Helmond Z."/>
            <person name="Wall M."/>
            <person name="Wallis J.M."/>
            <person name="White S."/>
            <person name="Whitehead S.L."/>
            <person name="Wilkinson J.E."/>
            <person name="Willey D.L."/>
            <person name="Williams H."/>
            <person name="Wilming L."/>
            <person name="Wray P.W."/>
            <person name="Wu Z."/>
            <person name="Coulson A."/>
            <person name="Vaudin M."/>
            <person name="Sulston J.E."/>
            <person name="Durbin R.M."/>
            <person name="Hubbard T."/>
            <person name="Wooster R."/>
            <person name="Dunham I."/>
            <person name="Carter N.P."/>
            <person name="McVean G."/>
            <person name="Ross M.T."/>
            <person name="Harrow J."/>
            <person name="Olson M.V."/>
            <person name="Beck S."/>
            <person name="Rogers J."/>
            <person name="Bentley D.R."/>
        </authorList>
    </citation>
    <scope>NUCLEOTIDE SEQUENCE [LARGE SCALE GENOMIC DNA]</scope>
</reference>
<reference key="4">
    <citation type="submission" date="2005-09" db="EMBL/GenBank/DDBJ databases">
        <authorList>
            <person name="Mural R.J."/>
            <person name="Istrail S."/>
            <person name="Sutton G.G."/>
            <person name="Florea L."/>
            <person name="Halpern A.L."/>
            <person name="Mobarry C.M."/>
            <person name="Lippert R."/>
            <person name="Walenz B."/>
            <person name="Shatkay H."/>
            <person name="Dew I."/>
            <person name="Miller J.R."/>
            <person name="Flanigan M.J."/>
            <person name="Edwards N.J."/>
            <person name="Bolanos R."/>
            <person name="Fasulo D."/>
            <person name="Halldorsson B.V."/>
            <person name="Hannenhalli S."/>
            <person name="Turner R."/>
            <person name="Yooseph S."/>
            <person name="Lu F."/>
            <person name="Nusskern D.R."/>
            <person name="Shue B.C."/>
            <person name="Zheng X.H."/>
            <person name="Zhong F."/>
            <person name="Delcher A.L."/>
            <person name="Huson D.H."/>
            <person name="Kravitz S.A."/>
            <person name="Mouchard L."/>
            <person name="Reinert K."/>
            <person name="Remington K.A."/>
            <person name="Clark A.G."/>
            <person name="Waterman M.S."/>
            <person name="Eichler E.E."/>
            <person name="Adams M.D."/>
            <person name="Hunkapiller M.W."/>
            <person name="Myers E.W."/>
            <person name="Venter J.C."/>
        </authorList>
    </citation>
    <scope>NUCLEOTIDE SEQUENCE [LARGE SCALE GENOMIC DNA]</scope>
</reference>
<reference key="5">
    <citation type="journal article" date="2004" name="Genome Res.">
        <title>The status, quality, and expansion of the NIH full-length cDNA project: the Mammalian Gene Collection (MGC).</title>
        <authorList>
            <consortium name="The MGC Project Team"/>
        </authorList>
    </citation>
    <scope>NUCLEOTIDE SEQUENCE [LARGE SCALE MRNA]</scope>
    <source>
        <tissue>Muscle</tissue>
    </source>
</reference>
<reference key="6">
    <citation type="journal article" date="2012" name="Cancer Metastasis Rev.">
        <title>Transcription factor PROX1: its role in development and cancer.</title>
        <authorList>
            <person name="Elsir T."/>
            <person name="Smits A."/>
            <person name="Lindstroem M.S."/>
            <person name="Nister M."/>
        </authorList>
    </citation>
    <scope>REVIEW</scope>
</reference>
<reference key="7">
    <citation type="journal article" date="2013" name="Nucleic Acids Res.">
        <title>Prospero-related homeobox 1 (Prox1) functions as a novel modulator of retinoic acid-related orphan receptors alpha- and gamma-mediated transactivation.</title>
        <authorList>
            <person name="Takeda Y."/>
            <person name="Jetten A.M."/>
        </authorList>
    </citation>
    <scope>FUNCTION</scope>
</reference>
<reference key="8">
    <citation type="journal article" date="2014" name="J. Proteomics">
        <title>An enzyme assisted RP-RPLC approach for in-depth analysis of human liver phosphoproteome.</title>
        <authorList>
            <person name="Bian Y."/>
            <person name="Song C."/>
            <person name="Cheng K."/>
            <person name="Dong M."/>
            <person name="Wang F."/>
            <person name="Huang J."/>
            <person name="Sun D."/>
            <person name="Wang L."/>
            <person name="Ye M."/>
            <person name="Zou H."/>
        </authorList>
    </citation>
    <scope>PHOSPHORYLATION [LARGE SCALE ANALYSIS] AT SER-177; SER-199; SER-295 AND SER-557</scope>
    <scope>IDENTIFICATION BY MASS SPECTROMETRY [LARGE SCALE ANALYSIS]</scope>
    <source>
        <tissue>Liver</tissue>
    </source>
</reference>
<reference key="9">
    <citation type="journal article" date="2015" name="Mol. Cell. Proteomics">
        <title>System-wide analysis of SUMOylation dynamics in response to replication stress reveals novel small ubiquitin-like modified target proteins and acceptor lysines relevant for genome stability.</title>
        <authorList>
            <person name="Xiao Z."/>
            <person name="Chang J.G."/>
            <person name="Hendriks I.A."/>
            <person name="Sigurdsson J.O."/>
            <person name="Olsen J.V."/>
            <person name="Vertegaal A.C."/>
        </authorList>
    </citation>
    <scope>SUMOYLATION [LARGE SCALE ANALYSIS] AT LYS-324</scope>
    <scope>IDENTIFICATION BY MASS SPECTROMETRY [LARGE SCALE ANALYSIS]</scope>
</reference>
<reference key="10">
    <citation type="journal article" date="2012" name="Proc. Natl. Acad. Sci. U.S.A.">
        <title>Determination of solution structures of proteins up to 40 kDa using CS-Rosetta with sparse NMR data from deuterated samples.</title>
        <authorList>
            <person name="Lange O.F."/>
            <person name="Rossi P."/>
            <person name="Sgourakis N.G."/>
            <person name="Song Y."/>
            <person name="Lee H.W."/>
            <person name="Aramini J.M."/>
            <person name="Ertekin A."/>
            <person name="Xiao R."/>
            <person name="Acton T.B."/>
            <person name="Montelione G.T."/>
            <person name="Baker D."/>
        </authorList>
    </citation>
    <scope>STRUCTURE BY NMR OF 575-737</scope>
</reference>
<comment type="function">
    <text evidence="4 6">Transcription factor involved in developmental processes such as cell fate determination, gene transcriptional regulation and progenitor cell regulation in a number of organs. Plays a critical role in embryonic development and functions as a key regulatory protein in neurogenesis and the development of the heart, eye lens, liver, pancreas and the lymphatic system. Involved in the regulation of the circadian rhythm. Represses: transcription of the retinoid-related orphan receptor RORG, transcriptional activator activity of RORA and RORG and the expression of RORA/G-target genes including core clock components: BMAL1, NPAS2 and CRY1 and metabolic genes: AVPR1A and ELOVL3.</text>
</comment>
<comment type="subunit">
    <text evidence="1">Interacts with RORA and RORG (via AF-2 motif).</text>
</comment>
<comment type="interaction">
    <interactant intactId="EBI-3912635">
        <id>Q92786</id>
    </interactant>
    <interactant intactId="EBI-741533">
        <id>P56545</id>
        <label>CTBP2</label>
    </interactant>
    <organismsDiffer>false</organismsDiffer>
    <experiments>2</experiments>
</comment>
<comment type="interaction">
    <interactant intactId="EBI-3912635">
        <id>Q92786</id>
    </interactant>
    <interactant intactId="EBI-636034">
        <id>P20823</id>
        <label>HNF1A</label>
    </interactant>
    <organismsDiffer>false</organismsDiffer>
    <experiments>3</experiments>
</comment>
<comment type="interaction">
    <interactant intactId="EBI-3912635">
        <id>Q92786</id>
    </interactant>
    <interactant intactId="EBI-1049011">
        <id>P41235</id>
        <label>HNF4A</label>
    </interactant>
    <organismsDiffer>false</organismsDiffer>
    <experiments>3</experiments>
</comment>
<comment type="interaction">
    <interactant intactId="EBI-3912635">
        <id>Q92786</id>
    </interactant>
    <interactant intactId="EBI-9257474">
        <id>O00482-2</id>
        <label>NR5A2</label>
    </interactant>
    <organismsDiffer>false</organismsDiffer>
    <experiments>9</experiments>
</comment>
<comment type="subcellular location">
    <subcellularLocation>
        <location evidence="1">Nucleus</location>
    </subcellularLocation>
    <text evidence="1">RORG promotes its nuclear localization.</text>
</comment>
<comment type="tissue specificity">
    <text evidence="5">Most actively expressed in the developing lens. Detected also in embryonic brain, lung, liver and kidney. In adult, it is more abundant in heart and liver than in brain, skeletal muscle, kidney and pancreas.</text>
</comment>
<comment type="domain">
    <text evidence="1 2">The Prospero-type homeodomain and the adjacent Prospero domain act as a single structural unit, the Homeo-Prospero domain. The Prospero-type homeodomain is essential for repression of RORG transcriptional activator activity.</text>
</comment>
<comment type="similarity">
    <text evidence="2">Belongs to the Prospero homeodomain family.</text>
</comment>
<organism>
    <name type="scientific">Homo sapiens</name>
    <name type="common">Human</name>
    <dbReference type="NCBI Taxonomy" id="9606"/>
    <lineage>
        <taxon>Eukaryota</taxon>
        <taxon>Metazoa</taxon>
        <taxon>Chordata</taxon>
        <taxon>Craniata</taxon>
        <taxon>Vertebrata</taxon>
        <taxon>Euteleostomi</taxon>
        <taxon>Mammalia</taxon>
        <taxon>Eutheria</taxon>
        <taxon>Euarchontoglires</taxon>
        <taxon>Primates</taxon>
        <taxon>Haplorrhini</taxon>
        <taxon>Catarrhini</taxon>
        <taxon>Hominidae</taxon>
        <taxon>Homo</taxon>
    </lineage>
</organism>
<feature type="chain" id="PRO_0000208880" description="Prospero homeobox protein 1">
    <location>
        <begin position="1"/>
        <end position="737"/>
    </location>
</feature>
<feature type="domain" description="Prospero-type homeo" evidence="2">
    <location>
        <begin position="577"/>
        <end position="635"/>
    </location>
</feature>
<feature type="domain" description="Prospero" evidence="2">
    <location>
        <begin position="636"/>
        <end position="735"/>
    </location>
</feature>
<feature type="region of interest" description="Interaction with RORG" evidence="1">
    <location>
        <begin position="1"/>
        <end position="28"/>
    </location>
</feature>
<feature type="region of interest" description="Disordered" evidence="3">
    <location>
        <begin position="103"/>
        <end position="149"/>
    </location>
</feature>
<feature type="region of interest" description="Disordered" evidence="3">
    <location>
        <begin position="178"/>
        <end position="242"/>
    </location>
</feature>
<feature type="region of interest" description="Disordered" evidence="3">
    <location>
        <begin position="320"/>
        <end position="344"/>
    </location>
</feature>
<feature type="region of interest" description="Disordered" evidence="3">
    <location>
        <begin position="445"/>
        <end position="476"/>
    </location>
</feature>
<feature type="region of interest" description="Homeo-Prospero" evidence="2">
    <location>
        <begin position="577"/>
        <end position="735"/>
    </location>
</feature>
<feature type="region of interest" description="Essential for nuclear localization, interaction with RORG, repression of RORG transcriptional activator activity" evidence="1">
    <location>
        <begin position="723"/>
        <end position="729"/>
    </location>
</feature>
<feature type="compositionally biased region" description="Polar residues" evidence="3">
    <location>
        <begin position="103"/>
        <end position="135"/>
    </location>
</feature>
<feature type="compositionally biased region" description="Low complexity" evidence="3">
    <location>
        <begin position="213"/>
        <end position="223"/>
    </location>
</feature>
<feature type="compositionally biased region" description="Basic and acidic residues" evidence="3">
    <location>
        <begin position="227"/>
        <end position="242"/>
    </location>
</feature>
<feature type="compositionally biased region" description="Basic and acidic residues" evidence="3">
    <location>
        <begin position="320"/>
        <end position="337"/>
    </location>
</feature>
<feature type="compositionally biased region" description="Polar residues" evidence="3">
    <location>
        <begin position="464"/>
        <end position="476"/>
    </location>
</feature>
<feature type="modified residue" description="Phosphoserine" evidence="8">
    <location>
        <position position="177"/>
    </location>
</feature>
<feature type="modified residue" description="Phosphoserine" evidence="1">
    <location>
        <position position="179"/>
    </location>
</feature>
<feature type="modified residue" description="Phosphoserine" evidence="8">
    <location>
        <position position="199"/>
    </location>
</feature>
<feature type="modified residue" description="Phosphoserine" evidence="1">
    <location>
        <position position="291"/>
    </location>
</feature>
<feature type="modified residue" description="Phosphoserine" evidence="8">
    <location>
        <position position="295"/>
    </location>
</feature>
<feature type="modified residue" description="Phosphoserine" evidence="1">
    <location>
        <position position="511"/>
    </location>
</feature>
<feature type="modified residue" description="Phosphoserine" evidence="1">
    <location>
        <position position="514"/>
    </location>
</feature>
<feature type="modified residue" description="Phosphoserine" evidence="8">
    <location>
        <position position="557"/>
    </location>
</feature>
<feature type="cross-link" description="Glycyl lysine isopeptide (Lys-Gly) (interchain with G-Cter in SUMO2)" evidence="9">
    <location>
        <position position="324"/>
    </location>
</feature>
<feature type="sequence variant" id="VAR_049362" description="In dbSNP:rs12121210.">
    <original>H</original>
    <variation>R</variation>
    <location>
        <position position="584"/>
    </location>
</feature>
<feature type="sequence conflict" description="In Ref. 1; AAC50656." evidence="7" ref="1">
    <original>RQL</original>
    <variation>LHV</variation>
    <location>
        <begin position="251"/>
        <end position="253"/>
    </location>
</feature>
<feature type="sequence conflict" description="In Ref. 1; AAC50656." evidence="7" ref="1">
    <original>PAA</original>
    <variation>LV</variation>
    <location>
        <begin position="455"/>
        <end position="457"/>
    </location>
</feature>
<feature type="sequence conflict" description="In Ref. 1; AAC50656." evidence="7" ref="1">
    <original>I</original>
    <variation>F</variation>
    <location>
        <position position="724"/>
    </location>
</feature>
<feature type="helix" evidence="10">
    <location>
        <begin position="582"/>
        <end position="592"/>
    </location>
</feature>
<feature type="helix" evidence="10">
    <location>
        <begin position="599"/>
        <end position="606"/>
    </location>
</feature>
<feature type="helix" evidence="10">
    <location>
        <begin position="614"/>
        <end position="645"/>
    </location>
</feature>
<feature type="helix" evidence="10">
    <location>
        <begin position="650"/>
        <end position="652"/>
    </location>
</feature>
<feature type="strand" evidence="10">
    <location>
        <begin position="653"/>
        <end position="656"/>
    </location>
</feature>
<feature type="helix" evidence="10">
    <location>
        <begin position="660"/>
        <end position="669"/>
    </location>
</feature>
<feature type="helix" evidence="10">
    <location>
        <begin position="679"/>
        <end position="698"/>
    </location>
</feature>
<feature type="helix" evidence="10">
    <location>
        <begin position="705"/>
        <end position="715"/>
    </location>
</feature>
<feature type="helix" evidence="10">
    <location>
        <begin position="728"/>
        <end position="730"/>
    </location>
</feature>
<feature type="helix" evidence="10">
    <location>
        <begin position="732"/>
        <end position="734"/>
    </location>
</feature>
<name>PROX1_HUMAN</name>
<sequence>MPDHDSTALLSRQTKRRRVDIGVKRTVGTASAFFAKARATFFSAMNPQGSEQDVEYSVVQHADGEKSNVLRKLLKRANSYEDAMMPFPGATIISQLLKNNMNKNGGTEPSFQASGLSSTGSEVHQEDICSNSSRDSPPECLSPFGRPTMSQFDMDRLCDEHLRAKRARVENIIRGMSHSPSVALRGNENEREMAPQSVSPRESYRENKRKQKLPQQQQQSFQQLVSARKEQKREERRQLKQQLEDMQKQLRQLQEKFYQIYDSTDSENDEDGNLSEDSMRSEILDARAQDSVGRSDNEMCELDPGQFIDRARALIREQEMAENKPKREGNNKERDHGPNSLQPEGKHLAETLKQELNTAMSQVVDTVVKVFSAKPSRQVPQVFPPLQIPQARFAVNGENHNFHTANQRLQCFGDVIIPNPLDTFGNVQMASSTDQTEALPLVVRKNSSDQSASGPAAGGHHQPLHQSPLSATTGFTTSTFRHPFPLPLMAYPFQSPLGAPSGSFSGKDRASPESLDLTRDTTSLRTKMSSHHLSHHPCSPAHPPSTAEGLSLSLIKSECGDLQDMSEISPYSGSAMQEGLSPNHLKKAKLMFFYTRYPSSNMLKTYFSDVKFNRCITSQLIKWFSNFREFYYIQMEKYARQAINDGVTSTEELSITRDCELYRALNMHYNKANDFEVPERFLEVAQITLREFFNAIIAGKDVDPSWKKAIYKVICKLDSEVPEIFKSPNCLQELLHE</sequence>
<accession>Q92786</accession>
<accession>A6NK29</accession>
<accession>A8K2B1</accession>
<accession>Q5SW76</accession>
<accession>Q8TB91</accession>
<evidence type="ECO:0000250" key="1">
    <source>
        <dbReference type="UniProtKB" id="P48437"/>
    </source>
</evidence>
<evidence type="ECO:0000255" key="2">
    <source>
        <dbReference type="PROSITE-ProRule" id="PRU01162"/>
    </source>
</evidence>
<evidence type="ECO:0000256" key="3">
    <source>
        <dbReference type="SAM" id="MobiDB-lite"/>
    </source>
</evidence>
<evidence type="ECO:0000269" key="4">
    <source>
    </source>
</evidence>
<evidence type="ECO:0000269" key="5">
    <source>
    </source>
</evidence>
<evidence type="ECO:0000303" key="6">
    <source>
    </source>
</evidence>
<evidence type="ECO:0000305" key="7"/>
<evidence type="ECO:0007744" key="8">
    <source>
    </source>
</evidence>
<evidence type="ECO:0007744" key="9">
    <source>
    </source>
</evidence>
<evidence type="ECO:0007829" key="10">
    <source>
        <dbReference type="PDB" id="2LMD"/>
    </source>
</evidence>
<protein>
    <recommendedName>
        <fullName>Prospero homeobox protein 1</fullName>
    </recommendedName>
    <alternativeName>
        <fullName>Homeobox prospero-like protein PROX1</fullName>
        <shortName>PROX-1</shortName>
    </alternativeName>
</protein>
<gene>
    <name type="primary">PROX1</name>
</gene>